<proteinExistence type="evidence at protein level"/>
<accession>P05798</accession>
<name>RNSA_KITAU</name>
<dbReference type="EC" id="4.6.1.24"/>
<dbReference type="PIR" id="A25655">
    <property type="entry name" value="NRSM"/>
</dbReference>
<dbReference type="PDB" id="1AY7">
    <property type="method" value="X-ray"/>
    <property type="resolution" value="1.70 A"/>
    <property type="chains" value="A=1-96"/>
</dbReference>
<dbReference type="PDB" id="1BOX">
    <property type="method" value="X-ray"/>
    <property type="resolution" value="1.60 A"/>
    <property type="chains" value="A=1-96"/>
</dbReference>
<dbReference type="PDB" id="1C54">
    <property type="method" value="NMR"/>
    <property type="chains" value="A=1-96"/>
</dbReference>
<dbReference type="PDB" id="1GMP">
    <property type="method" value="X-ray"/>
    <property type="resolution" value="1.70 A"/>
    <property type="chains" value="A/B=1-96"/>
</dbReference>
<dbReference type="PDB" id="1GMQ">
    <property type="method" value="X-ray"/>
    <property type="resolution" value="1.80 A"/>
    <property type="chains" value="A/B=1-96"/>
</dbReference>
<dbReference type="PDB" id="1GMR">
    <property type="method" value="X-ray"/>
    <property type="resolution" value="1.77 A"/>
    <property type="chains" value="A/B=1-96"/>
</dbReference>
<dbReference type="PDB" id="1I70">
    <property type="method" value="X-ray"/>
    <property type="resolution" value="1.70 A"/>
    <property type="chains" value="A/B=1-96"/>
</dbReference>
<dbReference type="PDB" id="1I8V">
    <property type="method" value="X-ray"/>
    <property type="resolution" value="1.25 A"/>
    <property type="chains" value="A/B=1-96"/>
</dbReference>
<dbReference type="PDB" id="1LNI">
    <property type="method" value="X-ray"/>
    <property type="resolution" value="1.00 A"/>
    <property type="chains" value="A/B=1-96"/>
</dbReference>
<dbReference type="PDB" id="1RGE">
    <property type="method" value="X-ray"/>
    <property type="resolution" value="1.15 A"/>
    <property type="chains" value="A/B=1-96"/>
</dbReference>
<dbReference type="PDB" id="1RGF">
    <property type="method" value="X-ray"/>
    <property type="resolution" value="1.20 A"/>
    <property type="chains" value="A/B=1-96"/>
</dbReference>
<dbReference type="PDB" id="1RGG">
    <property type="method" value="X-ray"/>
    <property type="resolution" value="1.20 A"/>
    <property type="chains" value="A/B=1-96"/>
</dbReference>
<dbReference type="PDB" id="1RGH">
    <property type="method" value="X-ray"/>
    <property type="resolution" value="1.20 A"/>
    <property type="chains" value="A/B=1-96"/>
</dbReference>
<dbReference type="PDB" id="1RSN">
    <property type="method" value="X-ray"/>
    <property type="resolution" value="2.00 A"/>
    <property type="chains" value="A/B=1-96"/>
</dbReference>
<dbReference type="PDB" id="1SAR">
    <property type="method" value="X-ray"/>
    <property type="resolution" value="1.80 A"/>
    <property type="chains" value="A/B=1-96"/>
</dbReference>
<dbReference type="PDB" id="1T2H">
    <property type="method" value="X-ray"/>
    <property type="resolution" value="1.00 A"/>
    <property type="chains" value="A/B=1-96"/>
</dbReference>
<dbReference type="PDB" id="1T2I">
    <property type="method" value="X-ray"/>
    <property type="resolution" value="1.10 A"/>
    <property type="chains" value="A=1-96"/>
</dbReference>
<dbReference type="PDB" id="1UCI">
    <property type="method" value="X-ray"/>
    <property type="resolution" value="1.80 A"/>
    <property type="chains" value="A/B=1-96"/>
</dbReference>
<dbReference type="PDB" id="1UCJ">
    <property type="method" value="X-ray"/>
    <property type="resolution" value="1.81 A"/>
    <property type="chains" value="A/B=1-96"/>
</dbReference>
<dbReference type="PDB" id="1UCK">
    <property type="method" value="X-ray"/>
    <property type="resolution" value="1.80 A"/>
    <property type="chains" value="A/B=1-96"/>
</dbReference>
<dbReference type="PDB" id="1UCL">
    <property type="method" value="X-ray"/>
    <property type="resolution" value="1.82 A"/>
    <property type="chains" value="A/B=1-96"/>
</dbReference>
<dbReference type="PDB" id="1YNV">
    <property type="method" value="X-ray"/>
    <property type="resolution" value="1.20 A"/>
    <property type="chains" value="X=1-96"/>
</dbReference>
<dbReference type="PDB" id="1ZGX">
    <property type="method" value="X-ray"/>
    <property type="resolution" value="1.13 A"/>
    <property type="chains" value="A=1-63, B=64-96"/>
</dbReference>
<dbReference type="PDB" id="2SAR">
    <property type="method" value="X-ray"/>
    <property type="resolution" value="1.80 A"/>
    <property type="chains" value="A/B=1-96"/>
</dbReference>
<dbReference type="PDB" id="3A5E">
    <property type="method" value="X-ray"/>
    <property type="resolution" value="1.60 A"/>
    <property type="chains" value="A=1-96"/>
</dbReference>
<dbReference type="PDB" id="4GHO">
    <property type="method" value="X-ray"/>
    <property type="resolution" value="1.10 A"/>
    <property type="chains" value="A/B=1-96"/>
</dbReference>
<dbReference type="PDB" id="4J5G">
    <property type="method" value="X-ray"/>
    <property type="resolution" value="1.31 A"/>
    <property type="chains" value="A/B=1-94"/>
</dbReference>
<dbReference type="PDB" id="4J5K">
    <property type="method" value="X-ray"/>
    <property type="resolution" value="1.23 A"/>
    <property type="chains" value="A/B=1-96"/>
</dbReference>
<dbReference type="PDBsum" id="1AY7"/>
<dbReference type="PDBsum" id="1BOX"/>
<dbReference type="PDBsum" id="1C54"/>
<dbReference type="PDBsum" id="1GMP"/>
<dbReference type="PDBsum" id="1GMQ"/>
<dbReference type="PDBsum" id="1GMR"/>
<dbReference type="PDBsum" id="1I70"/>
<dbReference type="PDBsum" id="1I8V"/>
<dbReference type="PDBsum" id="1LNI"/>
<dbReference type="PDBsum" id="1RGE"/>
<dbReference type="PDBsum" id="1RGF"/>
<dbReference type="PDBsum" id="1RGG"/>
<dbReference type="PDBsum" id="1RGH"/>
<dbReference type="PDBsum" id="1RSN"/>
<dbReference type="PDBsum" id="1SAR"/>
<dbReference type="PDBsum" id="1T2H"/>
<dbReference type="PDBsum" id="1T2I"/>
<dbReference type="PDBsum" id="1UCI"/>
<dbReference type="PDBsum" id="1UCJ"/>
<dbReference type="PDBsum" id="1UCK"/>
<dbReference type="PDBsum" id="1UCL"/>
<dbReference type="PDBsum" id="1YNV"/>
<dbReference type="PDBsum" id="1ZGX"/>
<dbReference type="PDBsum" id="2SAR"/>
<dbReference type="PDBsum" id="3A5E"/>
<dbReference type="PDBsum" id="4GHO"/>
<dbReference type="PDBsum" id="4J5G"/>
<dbReference type="PDBsum" id="4J5K"/>
<dbReference type="SMR" id="P05798"/>
<dbReference type="IntAct" id="P05798">
    <property type="interactions" value="1"/>
</dbReference>
<dbReference type="DrugBank" id="DB03178">
    <property type="generic name" value="Guanosine-2',3'-cyclophosphorothioate"/>
</dbReference>
<dbReference type="DrugBank" id="DB01937">
    <property type="generic name" value="Guanosine-2'-monophosphate"/>
</dbReference>
<dbReference type="eggNOG" id="COG4290">
    <property type="taxonomic scope" value="Bacteria"/>
</dbReference>
<dbReference type="BRENDA" id="4.6.1.24">
    <property type="organism ID" value="5978"/>
</dbReference>
<dbReference type="EvolutionaryTrace" id="P05798"/>
<dbReference type="GO" id="GO:0005576">
    <property type="term" value="C:extracellular region"/>
    <property type="evidence" value="ECO:0007669"/>
    <property type="project" value="UniProtKB-SubCell"/>
</dbReference>
<dbReference type="GO" id="GO:0016829">
    <property type="term" value="F:lyase activity"/>
    <property type="evidence" value="ECO:0007669"/>
    <property type="project" value="UniProtKB-KW"/>
</dbReference>
<dbReference type="GO" id="GO:0046589">
    <property type="term" value="F:ribonuclease T1 activity"/>
    <property type="evidence" value="ECO:0007669"/>
    <property type="project" value="UniProtKB-EC"/>
</dbReference>
<dbReference type="GO" id="GO:0003723">
    <property type="term" value="F:RNA binding"/>
    <property type="evidence" value="ECO:0007669"/>
    <property type="project" value="InterPro"/>
</dbReference>
<dbReference type="GO" id="GO:0004521">
    <property type="term" value="F:RNA endonuclease activity"/>
    <property type="evidence" value="ECO:0007669"/>
    <property type="project" value="InterPro"/>
</dbReference>
<dbReference type="CDD" id="cd00607">
    <property type="entry name" value="RNase_Sa"/>
    <property type="match status" value="1"/>
</dbReference>
<dbReference type="Gene3D" id="3.10.450.30">
    <property type="entry name" value="Microbial ribonucleases"/>
    <property type="match status" value="1"/>
</dbReference>
<dbReference type="InterPro" id="IPR000026">
    <property type="entry name" value="N1-like"/>
</dbReference>
<dbReference type="InterPro" id="IPR016191">
    <property type="entry name" value="Ribonuclease/ribotoxin"/>
</dbReference>
<dbReference type="Pfam" id="PF00545">
    <property type="entry name" value="Ribonuclease"/>
    <property type="match status" value="1"/>
</dbReference>
<dbReference type="SUPFAM" id="SSF53933">
    <property type="entry name" value="Microbial ribonucleases"/>
    <property type="match status" value="1"/>
</dbReference>
<sequence>DVSGTVCLSALPPEATDTLNLIASDGPFPYSQDGVVFQNRESVLPTQSYGYYHEYTVITPGARTRGTRRIITGEATQEDYYTGDHYATFSLIDQTC</sequence>
<protein>
    <recommendedName>
        <fullName>Guanyl-specific ribonuclease Sa</fullName>
        <shortName>RNase Sa</shortName>
        <ecNumber>4.6.1.24</ecNumber>
    </recommendedName>
</protein>
<comment type="catalytic activity">
    <reaction>
        <text>[RNA] containing guanosine + H2O = an [RNA fragment]-3'-guanosine-3'-phosphate + a 5'-hydroxy-ribonucleotide-3'-[RNA fragment].</text>
        <dbReference type="EC" id="4.6.1.24"/>
    </reaction>
</comment>
<comment type="subcellular location">
    <subcellularLocation>
        <location>Secreted</location>
    </subcellularLocation>
</comment>
<comment type="similarity">
    <text evidence="1">Belongs to the ribonuclease N1/T1 family.</text>
</comment>
<feature type="chain" id="PRO_0000137367" description="Guanyl-specific ribonuclease Sa">
    <location>
        <begin position="1"/>
        <end position="96"/>
    </location>
</feature>
<feature type="active site" description="Proton acceptor">
    <location>
        <position position="54"/>
    </location>
</feature>
<feature type="active site" description="Proton donor">
    <location>
        <position position="85"/>
    </location>
</feature>
<feature type="disulfide bond">
    <location>
        <begin position="7"/>
        <end position="96"/>
    </location>
</feature>
<feature type="mutagenesis site" description="Decreases protein stability.">
    <original>N</original>
    <variation>A</variation>
    <variation>D</variation>
    <variation>S</variation>
    <location>
        <position position="39"/>
    </location>
</feature>
<feature type="sequence conflict" description="In Ref. 1; AA sequence and 2; AA sequence." evidence="1" ref="1 2">
    <original>T</original>
    <variation>C</variation>
    <location>
        <position position="72"/>
    </location>
</feature>
<feature type="strand" evidence="4">
    <location>
        <begin position="5"/>
        <end position="7"/>
    </location>
</feature>
<feature type="helix" evidence="4">
    <location>
        <begin position="8"/>
        <end position="10"/>
    </location>
</feature>
<feature type="helix" evidence="4">
    <location>
        <begin position="13"/>
        <end position="23"/>
    </location>
</feature>
<feature type="turn" evidence="4">
    <location>
        <begin position="31"/>
        <end position="34"/>
    </location>
</feature>
<feature type="strand" evidence="5">
    <location>
        <begin position="35"/>
        <end position="37"/>
    </location>
</feature>
<feature type="strand" evidence="2">
    <location>
        <begin position="42"/>
        <end position="44"/>
    </location>
</feature>
<feature type="strand" evidence="3">
    <location>
        <begin position="48"/>
        <end position="50"/>
    </location>
</feature>
<feature type="strand" evidence="4">
    <location>
        <begin position="51"/>
        <end position="56"/>
    </location>
</feature>
<feature type="strand" evidence="3">
    <location>
        <begin position="63"/>
        <end position="65"/>
    </location>
</feature>
<feature type="strand" evidence="4">
    <location>
        <begin position="69"/>
        <end position="75"/>
    </location>
</feature>
<feature type="strand" evidence="4">
    <location>
        <begin position="79"/>
        <end position="84"/>
    </location>
</feature>
<feature type="strand" evidence="4">
    <location>
        <begin position="90"/>
        <end position="93"/>
    </location>
</feature>
<organism>
    <name type="scientific">Kitasatospora aureofaciens</name>
    <name type="common">Streptomyces aureofaciens</name>
    <dbReference type="NCBI Taxonomy" id="1894"/>
    <lineage>
        <taxon>Bacteria</taxon>
        <taxon>Bacillati</taxon>
        <taxon>Actinomycetota</taxon>
        <taxon>Actinomycetes</taxon>
        <taxon>Kitasatosporales</taxon>
        <taxon>Streptomycetaceae</taxon>
        <taxon>Kitasatospora</taxon>
    </lineage>
</organism>
<reference key="1">
    <citation type="journal article" date="1986" name="FEBS Lett.">
        <title>Amino acid sequence determination of guanyl-specific ribonuclease Sa from Streptomyces aureofaciens.</title>
        <authorList>
            <person name="Shlyapnikov S.V."/>
            <person name="Both V."/>
            <person name="Kulikov V.A."/>
            <person name="Dementiev A.A."/>
            <person name="Sevcik J."/>
            <person name="Zelinka J."/>
        </authorList>
    </citation>
    <scope>PROTEIN SEQUENCE</scope>
</reference>
<reference key="2">
    <citation type="journal article" date="1987" name="Bioorg. Khim.">
        <title>Extracellular guanyl-specific ribonuclease Sa from the actinomycete Streptomyces aureofaciens. Primary structure and homology with ribonucleases from bacteria and fungi.</title>
        <authorList>
            <person name="Shlyapnikov S.V."/>
            <person name="Both V."/>
            <person name="Kulikov V.A."/>
            <person name="Dementiev A.A."/>
            <person name="Zelinka J."/>
        </authorList>
    </citation>
    <scope>PROTEIN SEQUENCE</scope>
</reference>
<reference key="3">
    <citation type="journal article" date="1991" name="Acta Crystallogr. B">
        <title>Determination and restrained least-squares refinement of the structures of ribonuclease Sa and its complex with 3'-guanylic acid at 1.8-A resolution.</title>
        <authorList>
            <person name="Sevcik J."/>
            <person name="Dodson E.J."/>
            <person name="Dodson G.G."/>
        </authorList>
    </citation>
    <scope>X-RAY CRYSTALLOGRAPHY (1.8 ANGSTROMS)</scope>
</reference>
<reference key="4">
    <citation type="journal article" date="1993" name="Eur. J. Biochem.">
        <title>Complex of ribonuclease Sa with a cyclic nucleotide and a proposed model for the reaction intermediate.</title>
        <authorList>
            <person name="Sevcik J."/>
            <person name="Zegers I."/>
            <person name="Wyns L."/>
            <person name="Dauter Z."/>
            <person name="Wilson K.S."/>
        </authorList>
    </citation>
    <scope>X-RAY CRYSTALLOGRAPHY (2.0 ANGSTROMS)</scope>
</reference>
<reference key="5">
    <citation type="journal article" date="1993" name="Acta Crystallogr. D">
        <title>Complex of ribonuclease from Streptomyces aureofaciens with 2'-GMP at 1.7-A resolution.</title>
        <authorList>
            <person name="Sevcik J."/>
            <person name="Hill C.P."/>
            <person name="Dauter Z."/>
            <person name="Wilson K.S."/>
        </authorList>
    </citation>
    <scope>X-RAY CRYSTALLOGRAPHY (1.7 ANGSTROMS)</scope>
</reference>
<reference key="6">
    <citation type="journal article" date="1996" name="Acta Crystallogr. D">
        <title>Ribonuclease from Streptomyces aureofaciens at atomic resolution.</title>
        <authorList>
            <person name="Sevcik J."/>
            <person name="Dauter Z."/>
            <person name="Lamzin V.S."/>
            <person name="Wilson K.S."/>
        </authorList>
    </citation>
    <scope>X-RAY CRYSTALLOGRAPHY (1.15 ANGSTROMS)</scope>
    <scope>SEQUENCE REVISION TO 72</scope>
</reference>
<reference key="7">
    <citation type="journal article" date="1998" name="Acta Crystallogr. D">
        <title>Recognition of RNase Sa by the inhibitor barstar: structure of the complex at 1.7 A resolution.</title>
        <authorList>
            <person name="Sevcik J."/>
            <person name="Urbanikova L."/>
            <person name="Dauter Z."/>
            <person name="Wilson K.S."/>
        </authorList>
    </citation>
    <scope>X-RAY CRYSTALLOGRAPHY (1.7 ANGSTROMS) OF COMPLEX WITH BARSTAR</scope>
</reference>
<reference key="8">
    <citation type="journal article" date="1998" name="Biochemistry">
        <title>Contribution of a conserved asparagine to the conformational stability of ribonucleases Sa, Ba, and T1.</title>
        <authorList>
            <person name="Hebert E.J."/>
            <person name="Giletto A."/>
            <person name="Sevcik J."/>
            <person name="Urbanikova L."/>
            <person name="Wilson K.S."/>
            <person name="Dauter Z."/>
            <person name="Pace C.N."/>
        </authorList>
    </citation>
    <scope>X-RAY CRYSTALLOGRAPHY (1.6 ANGSTROMS) AND MUTAGENESIS OF ASN-39</scope>
</reference>
<reference key="9">
    <citation type="journal article" date="2001" name="Proteins">
        <title>Solution structure and dynamics of ribonuclease Sa.</title>
        <authorList>
            <person name="Laurents D."/>
            <person name="Perez-Canadillas J.M."/>
            <person name="Santoro J."/>
            <person name="Rico M."/>
            <person name="Schell D."/>
            <person name="Pace C.N."/>
            <person name="Bruix M."/>
        </authorList>
    </citation>
    <scope>STRUCTURE BY NMR</scope>
</reference>
<evidence type="ECO:0000305" key="1"/>
<evidence type="ECO:0007829" key="2">
    <source>
        <dbReference type="PDB" id="1BOX"/>
    </source>
</evidence>
<evidence type="ECO:0007829" key="3">
    <source>
        <dbReference type="PDB" id="1C54"/>
    </source>
</evidence>
<evidence type="ECO:0007829" key="4">
    <source>
        <dbReference type="PDB" id="1LNI"/>
    </source>
</evidence>
<evidence type="ECO:0007829" key="5">
    <source>
        <dbReference type="PDB" id="1SAR"/>
    </source>
</evidence>
<keyword id="KW-0002">3D-structure</keyword>
<keyword id="KW-0903">Direct protein sequencing</keyword>
<keyword id="KW-1015">Disulfide bond</keyword>
<keyword id="KW-0255">Endonuclease</keyword>
<keyword id="KW-0378">Hydrolase</keyword>
<keyword id="KW-0456">Lyase</keyword>
<keyword id="KW-0540">Nuclease</keyword>
<keyword id="KW-0964">Secreted</keyword>
<gene>
    <name type="primary">rnaSA</name>
</gene>